<sequence>MSGKELRYGFTTGACAAAAVKAAAQMLRDQAMVREVELMLPCGIGANFQVHGGVLRDNTASCYVVKDAGDDPDVTNGAEIHVTASIEFFTKNEIKIEGGTGIGRVTKPGLAVPVGAWAINPVPRSMILEVVKEVFALRCIPATLTFSISIPNGEELAKRTLNERLGIVGGLSILGTTGIVKPISAKAWTDTVDASVDVALACGARTVVLATGRSSEIVAQKHLSLSEEAFVMMGDHFGYAMRSCASKGVPEVVVAGQFAKLVKIACGHEQTHVTSSQMDLDALAWWLREVPATAHLEQMAREANTARHLLEASGYNKALIELVCSRVLKVCADVAPWMKARVMLAGYHGDLLYFSP</sequence>
<dbReference type="EC" id="2.1.1.195" evidence="1"/>
<dbReference type="EMBL" id="CP001661">
    <property type="protein sequence ID" value="ACT19631.1"/>
    <property type="molecule type" value="Genomic_DNA"/>
</dbReference>
<dbReference type="SMR" id="C6E679"/>
<dbReference type="STRING" id="443144.GM21_3610"/>
<dbReference type="KEGG" id="gem:GM21_3610"/>
<dbReference type="eggNOG" id="COG1903">
    <property type="taxonomic scope" value="Bacteria"/>
</dbReference>
<dbReference type="HOGENOM" id="CLU_041273_0_0_7"/>
<dbReference type="OrthoDB" id="6439987at2"/>
<dbReference type="UniPathway" id="UPA00148">
    <property type="reaction ID" value="UER00227"/>
</dbReference>
<dbReference type="GO" id="GO:0043780">
    <property type="term" value="F:cobalt-precorrin-5B C1-methyltransferase activity"/>
    <property type="evidence" value="ECO:0007669"/>
    <property type="project" value="RHEA"/>
</dbReference>
<dbReference type="GO" id="GO:0019251">
    <property type="term" value="P:anaerobic cobalamin biosynthetic process"/>
    <property type="evidence" value="ECO:0007669"/>
    <property type="project" value="UniProtKB-UniRule"/>
</dbReference>
<dbReference type="GO" id="GO:0032259">
    <property type="term" value="P:methylation"/>
    <property type="evidence" value="ECO:0007669"/>
    <property type="project" value="UniProtKB-KW"/>
</dbReference>
<dbReference type="Gene3D" id="3.30.2110.10">
    <property type="entry name" value="CbiD-like"/>
    <property type="match status" value="1"/>
</dbReference>
<dbReference type="HAMAP" id="MF_00787">
    <property type="entry name" value="CbiD"/>
    <property type="match status" value="1"/>
</dbReference>
<dbReference type="InterPro" id="IPR002748">
    <property type="entry name" value="CbiD"/>
</dbReference>
<dbReference type="InterPro" id="IPR036074">
    <property type="entry name" value="CbiD_sf"/>
</dbReference>
<dbReference type="NCBIfam" id="TIGR00312">
    <property type="entry name" value="cbiD"/>
    <property type="match status" value="1"/>
</dbReference>
<dbReference type="NCBIfam" id="NF000849">
    <property type="entry name" value="PRK00075.1-1"/>
    <property type="match status" value="1"/>
</dbReference>
<dbReference type="PANTHER" id="PTHR35863">
    <property type="entry name" value="COBALT-PRECORRIN-5B C(1)-METHYLTRANSFERASE"/>
    <property type="match status" value="1"/>
</dbReference>
<dbReference type="PANTHER" id="PTHR35863:SF1">
    <property type="entry name" value="COBALT-PRECORRIN-5B C(1)-METHYLTRANSFERASE"/>
    <property type="match status" value="1"/>
</dbReference>
<dbReference type="Pfam" id="PF01888">
    <property type="entry name" value="CbiD"/>
    <property type="match status" value="1"/>
</dbReference>
<dbReference type="PIRSF" id="PIRSF026782">
    <property type="entry name" value="CbiD"/>
    <property type="match status" value="1"/>
</dbReference>
<dbReference type="SUPFAM" id="SSF111342">
    <property type="entry name" value="CbiD-like"/>
    <property type="match status" value="1"/>
</dbReference>
<comment type="function">
    <text evidence="1">Catalyzes the methylation of C-1 in cobalt-precorrin-5B to form cobalt-precorrin-6A.</text>
</comment>
<comment type="catalytic activity">
    <reaction evidence="1">
        <text>Co-precorrin-5B + S-adenosyl-L-methionine = Co-precorrin-6A + S-adenosyl-L-homocysteine</text>
        <dbReference type="Rhea" id="RHEA:26285"/>
        <dbReference type="ChEBI" id="CHEBI:57856"/>
        <dbReference type="ChEBI" id="CHEBI:59789"/>
        <dbReference type="ChEBI" id="CHEBI:60063"/>
        <dbReference type="ChEBI" id="CHEBI:60064"/>
        <dbReference type="EC" id="2.1.1.195"/>
    </reaction>
</comment>
<comment type="pathway">
    <text evidence="1">Cofactor biosynthesis; adenosylcobalamin biosynthesis; cob(II)yrinate a,c-diamide from sirohydrochlorin (anaerobic route): step 6/10.</text>
</comment>
<comment type="similarity">
    <text evidence="1">Belongs to the CbiD family.</text>
</comment>
<protein>
    <recommendedName>
        <fullName evidence="1">Cobalt-precorrin-5B C(1)-methyltransferase</fullName>
        <ecNumber evidence="1">2.1.1.195</ecNumber>
    </recommendedName>
    <alternativeName>
        <fullName evidence="1">Cobalt-precorrin-6A synthase</fullName>
    </alternativeName>
</protein>
<accession>C6E679</accession>
<name>CBID_GEOSM</name>
<evidence type="ECO:0000255" key="1">
    <source>
        <dbReference type="HAMAP-Rule" id="MF_00787"/>
    </source>
</evidence>
<organism>
    <name type="scientific">Geobacter sp. (strain M21)</name>
    <dbReference type="NCBI Taxonomy" id="443144"/>
    <lineage>
        <taxon>Bacteria</taxon>
        <taxon>Pseudomonadati</taxon>
        <taxon>Thermodesulfobacteriota</taxon>
        <taxon>Desulfuromonadia</taxon>
        <taxon>Geobacterales</taxon>
        <taxon>Geobacteraceae</taxon>
        <taxon>Geobacter</taxon>
    </lineage>
</organism>
<gene>
    <name evidence="1" type="primary">cbiD</name>
    <name type="ordered locus">GM21_3610</name>
</gene>
<keyword id="KW-0169">Cobalamin biosynthesis</keyword>
<keyword id="KW-0489">Methyltransferase</keyword>
<keyword id="KW-0949">S-adenosyl-L-methionine</keyword>
<keyword id="KW-0808">Transferase</keyword>
<feature type="chain" id="PRO_1000212937" description="Cobalt-precorrin-5B C(1)-methyltransferase">
    <location>
        <begin position="1"/>
        <end position="356"/>
    </location>
</feature>
<proteinExistence type="inferred from homology"/>
<reference key="1">
    <citation type="submission" date="2009-07" db="EMBL/GenBank/DDBJ databases">
        <title>Complete sequence of Geobacter sp. M21.</title>
        <authorList>
            <consortium name="US DOE Joint Genome Institute"/>
            <person name="Lucas S."/>
            <person name="Copeland A."/>
            <person name="Lapidus A."/>
            <person name="Glavina del Rio T."/>
            <person name="Dalin E."/>
            <person name="Tice H."/>
            <person name="Bruce D."/>
            <person name="Goodwin L."/>
            <person name="Pitluck S."/>
            <person name="Saunders E."/>
            <person name="Brettin T."/>
            <person name="Detter J.C."/>
            <person name="Han C."/>
            <person name="Larimer F."/>
            <person name="Land M."/>
            <person name="Hauser L."/>
            <person name="Kyrpides N."/>
            <person name="Ovchinnikova G."/>
            <person name="Lovley D."/>
        </authorList>
    </citation>
    <scope>NUCLEOTIDE SEQUENCE [LARGE SCALE GENOMIC DNA]</scope>
    <source>
        <strain>M21</strain>
    </source>
</reference>